<comment type="catalytic activity">
    <reaction evidence="1">
        <text>tRNA(Lys) + L-lysine + ATP = L-lysyl-tRNA(Lys) + AMP + diphosphate</text>
        <dbReference type="Rhea" id="RHEA:20792"/>
        <dbReference type="Rhea" id="RHEA-COMP:9696"/>
        <dbReference type="Rhea" id="RHEA-COMP:9697"/>
        <dbReference type="ChEBI" id="CHEBI:30616"/>
        <dbReference type="ChEBI" id="CHEBI:32551"/>
        <dbReference type="ChEBI" id="CHEBI:33019"/>
        <dbReference type="ChEBI" id="CHEBI:78442"/>
        <dbReference type="ChEBI" id="CHEBI:78529"/>
        <dbReference type="ChEBI" id="CHEBI:456215"/>
        <dbReference type="EC" id="6.1.1.6"/>
    </reaction>
</comment>
<comment type="cofactor">
    <cofactor evidence="1">
        <name>Mg(2+)</name>
        <dbReference type="ChEBI" id="CHEBI:18420"/>
    </cofactor>
    <text evidence="1">Binds 3 Mg(2+) ions per subunit.</text>
</comment>
<comment type="subunit">
    <text evidence="1">Homodimer.</text>
</comment>
<comment type="subcellular location">
    <subcellularLocation>
        <location evidence="1">Cytoplasm</location>
    </subcellularLocation>
</comment>
<comment type="similarity">
    <text evidence="1">Belongs to the class-II aminoacyl-tRNA synthetase family.</text>
</comment>
<feature type="chain" id="PRO_1000078509" description="Lysine--tRNA ligase">
    <location>
        <begin position="1"/>
        <end position="500"/>
    </location>
</feature>
<feature type="binding site" evidence="1">
    <location>
        <position position="410"/>
    </location>
    <ligand>
        <name>Mg(2+)</name>
        <dbReference type="ChEBI" id="CHEBI:18420"/>
        <label>1</label>
    </ligand>
</feature>
<feature type="binding site" evidence="1">
    <location>
        <position position="417"/>
    </location>
    <ligand>
        <name>Mg(2+)</name>
        <dbReference type="ChEBI" id="CHEBI:18420"/>
        <label>1</label>
    </ligand>
</feature>
<feature type="binding site" evidence="1">
    <location>
        <position position="417"/>
    </location>
    <ligand>
        <name>Mg(2+)</name>
        <dbReference type="ChEBI" id="CHEBI:18420"/>
        <label>2</label>
    </ligand>
</feature>
<reference key="1">
    <citation type="submission" date="2007-11" db="EMBL/GenBank/DDBJ databases">
        <title>Complete sequence of chromosome of Shewanella baltica OS195.</title>
        <authorList>
            <consortium name="US DOE Joint Genome Institute"/>
            <person name="Copeland A."/>
            <person name="Lucas S."/>
            <person name="Lapidus A."/>
            <person name="Barry K."/>
            <person name="Glavina del Rio T."/>
            <person name="Dalin E."/>
            <person name="Tice H."/>
            <person name="Pitluck S."/>
            <person name="Chain P."/>
            <person name="Malfatti S."/>
            <person name="Shin M."/>
            <person name="Vergez L."/>
            <person name="Schmutz J."/>
            <person name="Larimer F."/>
            <person name="Land M."/>
            <person name="Hauser L."/>
            <person name="Kyrpides N."/>
            <person name="Kim E."/>
            <person name="Brettar I."/>
            <person name="Rodrigues J."/>
            <person name="Konstantinidis K."/>
            <person name="Klappenbach J."/>
            <person name="Hofle M."/>
            <person name="Tiedje J."/>
            <person name="Richardson P."/>
        </authorList>
    </citation>
    <scope>NUCLEOTIDE SEQUENCE [LARGE SCALE GENOMIC DNA]</scope>
    <source>
        <strain>OS195</strain>
    </source>
</reference>
<protein>
    <recommendedName>
        <fullName evidence="1">Lysine--tRNA ligase</fullName>
        <ecNumber evidence="1">6.1.1.6</ecNumber>
    </recommendedName>
    <alternativeName>
        <fullName evidence="1">Lysyl-tRNA synthetase</fullName>
        <shortName evidence="1">LysRS</shortName>
    </alternativeName>
</protein>
<gene>
    <name evidence="1" type="primary">lysS</name>
    <name type="ordered locus">Sbal195_3614</name>
</gene>
<keyword id="KW-0030">Aminoacyl-tRNA synthetase</keyword>
<keyword id="KW-0067">ATP-binding</keyword>
<keyword id="KW-0963">Cytoplasm</keyword>
<keyword id="KW-0436">Ligase</keyword>
<keyword id="KW-0460">Magnesium</keyword>
<keyword id="KW-0479">Metal-binding</keyword>
<keyword id="KW-0547">Nucleotide-binding</keyword>
<keyword id="KW-0648">Protein biosynthesis</keyword>
<proteinExistence type="inferred from homology"/>
<dbReference type="EC" id="6.1.1.6" evidence="1"/>
<dbReference type="EMBL" id="CP000891">
    <property type="protein sequence ID" value="ABX50776.1"/>
    <property type="molecule type" value="Genomic_DNA"/>
</dbReference>
<dbReference type="RefSeq" id="WP_006080389.1">
    <property type="nucleotide sequence ID" value="NC_009997.1"/>
</dbReference>
<dbReference type="SMR" id="A9L1I0"/>
<dbReference type="GeneID" id="11774955"/>
<dbReference type="KEGG" id="sbn:Sbal195_3614"/>
<dbReference type="HOGENOM" id="CLU_008255_6_0_6"/>
<dbReference type="Proteomes" id="UP000000770">
    <property type="component" value="Chromosome"/>
</dbReference>
<dbReference type="GO" id="GO:0005829">
    <property type="term" value="C:cytosol"/>
    <property type="evidence" value="ECO:0007669"/>
    <property type="project" value="TreeGrafter"/>
</dbReference>
<dbReference type="GO" id="GO:0005524">
    <property type="term" value="F:ATP binding"/>
    <property type="evidence" value="ECO:0007669"/>
    <property type="project" value="UniProtKB-UniRule"/>
</dbReference>
<dbReference type="GO" id="GO:0004824">
    <property type="term" value="F:lysine-tRNA ligase activity"/>
    <property type="evidence" value="ECO:0007669"/>
    <property type="project" value="UniProtKB-UniRule"/>
</dbReference>
<dbReference type="GO" id="GO:0000287">
    <property type="term" value="F:magnesium ion binding"/>
    <property type="evidence" value="ECO:0007669"/>
    <property type="project" value="UniProtKB-UniRule"/>
</dbReference>
<dbReference type="GO" id="GO:0000049">
    <property type="term" value="F:tRNA binding"/>
    <property type="evidence" value="ECO:0007669"/>
    <property type="project" value="TreeGrafter"/>
</dbReference>
<dbReference type="GO" id="GO:0006430">
    <property type="term" value="P:lysyl-tRNA aminoacylation"/>
    <property type="evidence" value="ECO:0007669"/>
    <property type="project" value="UniProtKB-UniRule"/>
</dbReference>
<dbReference type="CDD" id="cd00775">
    <property type="entry name" value="LysRS_core"/>
    <property type="match status" value="1"/>
</dbReference>
<dbReference type="CDD" id="cd04322">
    <property type="entry name" value="LysRS_N"/>
    <property type="match status" value="1"/>
</dbReference>
<dbReference type="FunFam" id="2.40.50.140:FF:000024">
    <property type="entry name" value="Lysine--tRNA ligase"/>
    <property type="match status" value="1"/>
</dbReference>
<dbReference type="FunFam" id="3.30.930.10:FF:000001">
    <property type="entry name" value="Lysine--tRNA ligase"/>
    <property type="match status" value="1"/>
</dbReference>
<dbReference type="Gene3D" id="3.30.930.10">
    <property type="entry name" value="Bira Bifunctional Protein, Domain 2"/>
    <property type="match status" value="1"/>
</dbReference>
<dbReference type="Gene3D" id="2.40.50.140">
    <property type="entry name" value="Nucleic acid-binding proteins"/>
    <property type="match status" value="1"/>
</dbReference>
<dbReference type="HAMAP" id="MF_00252">
    <property type="entry name" value="Lys_tRNA_synth_class2"/>
    <property type="match status" value="1"/>
</dbReference>
<dbReference type="InterPro" id="IPR004364">
    <property type="entry name" value="Aa-tRNA-synt_II"/>
</dbReference>
<dbReference type="InterPro" id="IPR006195">
    <property type="entry name" value="aa-tRNA-synth_II"/>
</dbReference>
<dbReference type="InterPro" id="IPR045864">
    <property type="entry name" value="aa-tRNA-synth_II/BPL/LPL"/>
</dbReference>
<dbReference type="InterPro" id="IPR002313">
    <property type="entry name" value="Lys-tRNA-ligase_II"/>
</dbReference>
<dbReference type="InterPro" id="IPR044136">
    <property type="entry name" value="Lys-tRNA-ligase_II_N"/>
</dbReference>
<dbReference type="InterPro" id="IPR018149">
    <property type="entry name" value="Lys-tRNA-synth_II_C"/>
</dbReference>
<dbReference type="InterPro" id="IPR012340">
    <property type="entry name" value="NA-bd_OB-fold"/>
</dbReference>
<dbReference type="InterPro" id="IPR004365">
    <property type="entry name" value="NA-bd_OB_tRNA"/>
</dbReference>
<dbReference type="NCBIfam" id="TIGR00499">
    <property type="entry name" value="lysS_bact"/>
    <property type="match status" value="1"/>
</dbReference>
<dbReference type="NCBIfam" id="NF001756">
    <property type="entry name" value="PRK00484.1"/>
    <property type="match status" value="1"/>
</dbReference>
<dbReference type="PANTHER" id="PTHR42918:SF15">
    <property type="entry name" value="LYSINE--TRNA LIGASE, CHLOROPLASTIC_MITOCHONDRIAL"/>
    <property type="match status" value="1"/>
</dbReference>
<dbReference type="PANTHER" id="PTHR42918">
    <property type="entry name" value="LYSYL-TRNA SYNTHETASE"/>
    <property type="match status" value="1"/>
</dbReference>
<dbReference type="Pfam" id="PF00152">
    <property type="entry name" value="tRNA-synt_2"/>
    <property type="match status" value="1"/>
</dbReference>
<dbReference type="Pfam" id="PF01336">
    <property type="entry name" value="tRNA_anti-codon"/>
    <property type="match status" value="1"/>
</dbReference>
<dbReference type="PRINTS" id="PR00982">
    <property type="entry name" value="TRNASYNTHLYS"/>
</dbReference>
<dbReference type="SUPFAM" id="SSF55681">
    <property type="entry name" value="Class II aaRS and biotin synthetases"/>
    <property type="match status" value="1"/>
</dbReference>
<dbReference type="SUPFAM" id="SSF50249">
    <property type="entry name" value="Nucleic acid-binding proteins"/>
    <property type="match status" value="1"/>
</dbReference>
<dbReference type="PROSITE" id="PS50862">
    <property type="entry name" value="AA_TRNA_LIGASE_II"/>
    <property type="match status" value="1"/>
</dbReference>
<sequence>MTEQVIDENKLIAERRAKLESIRPNCSANAHPNTFRRTHKAAELQAQYGQNTKEELEALGFKTSIAGRIMAKRGPFLVIQDVSGRIQAYAEKSVQADLKERFQGLDIGDIIGVTGQLHLSGKGDLYVNMEQYELLTKALRPLPADYYGLADQEMRYRQRYVDLIVNEDSRNAFIMRSKVVSAIRNFMIKKEFMEVETPMMHVIPGGASARPFITHHNALDMPMYLRIAPELYLKRLVVGGFERVFEINRNFRNEGLSPRHNPEFTMMEFYMAYADYKDLMDLTEEMLSSIAIELLGSAQMPYGEHTVDFGGPYARLSMLEAIQKYNPDNATIQAMTYEQVKDVEFMRDLAKSLGMKIEKFWTCGQLLEEIFGETAEWQLMQPTFITGYPADISPLARRNDDNHFITDRFEFFIGGREVANGFSELNDAEDQDNRFKAQVDAKDAGDDEAMFYDADYITALEHGLPPTAGQGIGIDRLVMLFTNTHTIRDVILFPAMRPQA</sequence>
<accession>A9L1I0</accession>
<name>SYK_SHEB9</name>
<evidence type="ECO:0000255" key="1">
    <source>
        <dbReference type="HAMAP-Rule" id="MF_00252"/>
    </source>
</evidence>
<organism>
    <name type="scientific">Shewanella baltica (strain OS195)</name>
    <dbReference type="NCBI Taxonomy" id="399599"/>
    <lineage>
        <taxon>Bacteria</taxon>
        <taxon>Pseudomonadati</taxon>
        <taxon>Pseudomonadota</taxon>
        <taxon>Gammaproteobacteria</taxon>
        <taxon>Alteromonadales</taxon>
        <taxon>Shewanellaceae</taxon>
        <taxon>Shewanella</taxon>
    </lineage>
</organism>